<gene>
    <name type="primary">ATTI6</name>
    <name type="ordered locus">At2g43550</name>
    <name type="ORF">T01O24.29</name>
</gene>
<feature type="signal peptide" evidence="2">
    <location>
        <begin position="1"/>
        <end position="26"/>
    </location>
</feature>
<feature type="chain" id="PRO_0000031096" description="Defensin-like protein 197">
    <location>
        <begin position="27"/>
        <end position="89"/>
    </location>
</feature>
<feature type="site" description="Reactive bond" evidence="1">
    <location>
        <begin position="49"/>
        <end position="50"/>
    </location>
</feature>
<feature type="disulfide bond" evidence="1">
    <location>
        <begin position="33"/>
        <end position="86"/>
    </location>
</feature>
<feature type="disulfide bond" evidence="1">
    <location>
        <begin position="46"/>
        <end position="70"/>
    </location>
</feature>
<feature type="disulfide bond" evidence="1">
    <location>
        <begin position="55"/>
        <end position="81"/>
    </location>
</feature>
<feature type="disulfide bond" evidence="1">
    <location>
        <begin position="59"/>
        <end position="83"/>
    </location>
</feature>
<feature type="sequence variant" description="In strain: cv. Cvi-1, cv. Fe-1a, cv. Goe-0, cv. Ita-0, cv. Nd-1 and cv. Wei-0.">
    <original>F</original>
    <variation>S</variation>
    <location>
        <position position="3"/>
    </location>
</feature>
<feature type="sequence variant" description="In strain: cv. Cvi-1, cv. Fe-1a, cv. Goe-0, cv. Ita-0, cv. Nd-1 and cv. Wei-0.">
    <original>L</original>
    <variation>F</variation>
    <location>
        <position position="8"/>
    </location>
</feature>
<feature type="sequence variant" description="In strain: cv. Cvi-1, cv. Fe-1a, cv. Goe-0, cv. Ita-0, cv. Nd-1 and cv. Wei-0.">
    <original>F</original>
    <variation>I</variation>
    <location>
        <position position="13"/>
    </location>
</feature>
<feature type="sequence variant" description="In strain: cv. Col-1.">
    <location>
        <position position="19"/>
    </location>
</feature>
<feature type="sequence conflict" description="In Ref. 4; BAC43343." evidence="3" ref="4">
    <original>F</original>
    <variation>L</variation>
    <location>
        <position position="3"/>
    </location>
</feature>
<sequence>MKFVSVFLVLFIFFLVVLEAPEKIEAKDDKFICVVEYGGDVGPTFCNPKFFPTLCRQNCRSFKGAKGGKCVKQPKHKHIKCFCDYCKDD</sequence>
<accession>O22869</accession>
<accession>F4IR70</accession>
<accession>Q6ZZS7</accession>
<accession>Q6ZZU1</accession>
<accession>Q8GWN0</accession>
<comment type="subcellular location">
    <subcellularLocation>
        <location evidence="1">Secreted</location>
    </subcellularLocation>
</comment>
<comment type="similarity">
    <text evidence="3">Belongs to the DEFL family. Protease inhibitor I18 (RTI/MTI-2) subfamily.</text>
</comment>
<comment type="caution">
    <text evidence="4">Was initially thought to be a protease inhibitor.</text>
</comment>
<comment type="sequence caution" evidence="3">
    <conflict type="erroneous initiation">
        <sequence resource="EMBL-CDS" id="AAB64322"/>
    </conflict>
    <text>Extended N-terminus.</text>
</comment>
<protein>
    <recommendedName>
        <fullName>Defensin-like protein 197</fullName>
    </recommendedName>
    <alternativeName>
        <fullName>Trypsin inhibitor ATTI-6</fullName>
    </alternativeName>
</protein>
<proteinExistence type="inferred from homology"/>
<reference key="1">
    <citation type="journal article" date="2004" name="Genetics">
        <title>Functional divergence in tandemly duplicated Arabidopsis thaliana trypsin inhibitor genes.</title>
        <authorList>
            <person name="Clauss M.J."/>
            <person name="Mitchell-Olds T."/>
        </authorList>
    </citation>
    <scope>NUCLEOTIDE SEQUENCE [GENOMIC DNA]</scope>
    <scope>GENE FAMILY</scope>
    <scope>NOMENCLATURE</scope>
    <source>
        <strain>cv. Col-1</strain>
        <strain>cv. Cvi-1</strain>
        <strain>cv. Di-0</strain>
        <strain>cv. Fe-1a</strain>
        <strain>cv. Goe-0</strain>
        <strain>cv. Ita-0</strain>
        <strain>cv. Kas-1</strain>
        <strain>cv. Landsberg erecta</strain>
        <strain>cv. Le-0</strain>
        <strain>cv. Nd-1</strain>
        <strain>cv. Nok-0</strain>
        <strain>cv. Rsch-0</strain>
        <strain>cv. Sah-0</strain>
        <strain>cv. Ta-0</strain>
        <strain>cv. Wassilewskija</strain>
        <strain>cv. Wei-0</strain>
        <strain>cv. Wil-2</strain>
        <tissue>Leaf</tissue>
    </source>
</reference>
<reference key="2">
    <citation type="journal article" date="1999" name="Nature">
        <title>Sequence and analysis of chromosome 2 of the plant Arabidopsis thaliana.</title>
        <authorList>
            <person name="Lin X."/>
            <person name="Kaul S."/>
            <person name="Rounsley S.D."/>
            <person name="Shea T.P."/>
            <person name="Benito M.-I."/>
            <person name="Town C.D."/>
            <person name="Fujii C.Y."/>
            <person name="Mason T.M."/>
            <person name="Bowman C.L."/>
            <person name="Barnstead M.E."/>
            <person name="Feldblyum T.V."/>
            <person name="Buell C.R."/>
            <person name="Ketchum K.A."/>
            <person name="Lee J.J."/>
            <person name="Ronning C.M."/>
            <person name="Koo H.L."/>
            <person name="Moffat K.S."/>
            <person name="Cronin L.A."/>
            <person name="Shen M."/>
            <person name="Pai G."/>
            <person name="Van Aken S."/>
            <person name="Umayam L."/>
            <person name="Tallon L.J."/>
            <person name="Gill J.E."/>
            <person name="Adams M.D."/>
            <person name="Carrera A.J."/>
            <person name="Creasy T.H."/>
            <person name="Goodman H.M."/>
            <person name="Somerville C.R."/>
            <person name="Copenhaver G.P."/>
            <person name="Preuss D."/>
            <person name="Nierman W.C."/>
            <person name="White O."/>
            <person name="Eisen J.A."/>
            <person name="Salzberg S.L."/>
            <person name="Fraser C.M."/>
            <person name="Venter J.C."/>
        </authorList>
    </citation>
    <scope>NUCLEOTIDE SEQUENCE [LARGE SCALE GENOMIC DNA]</scope>
    <source>
        <strain>cv. Columbia</strain>
    </source>
</reference>
<reference key="3">
    <citation type="journal article" date="2017" name="Plant J.">
        <title>Araport11: a complete reannotation of the Arabidopsis thaliana reference genome.</title>
        <authorList>
            <person name="Cheng C.Y."/>
            <person name="Krishnakumar V."/>
            <person name="Chan A.P."/>
            <person name="Thibaud-Nissen F."/>
            <person name="Schobel S."/>
            <person name="Town C.D."/>
        </authorList>
    </citation>
    <scope>GENOME REANNOTATION</scope>
    <source>
        <strain>cv. Columbia</strain>
    </source>
</reference>
<reference key="4">
    <citation type="journal article" date="2002" name="Science">
        <title>Functional annotation of a full-length Arabidopsis cDNA collection.</title>
        <authorList>
            <person name="Seki M."/>
            <person name="Narusaka M."/>
            <person name="Kamiya A."/>
            <person name="Ishida J."/>
            <person name="Satou M."/>
            <person name="Sakurai T."/>
            <person name="Nakajima M."/>
            <person name="Enju A."/>
            <person name="Akiyama K."/>
            <person name="Oono Y."/>
            <person name="Muramatsu M."/>
            <person name="Hayashizaki Y."/>
            <person name="Kawai J."/>
            <person name="Carninci P."/>
            <person name="Itoh M."/>
            <person name="Ishii Y."/>
            <person name="Arakawa T."/>
            <person name="Shibata K."/>
            <person name="Shinagawa A."/>
            <person name="Shinozaki K."/>
        </authorList>
    </citation>
    <scope>NUCLEOTIDE SEQUENCE [LARGE SCALE MRNA]</scope>
    <source>
        <strain>cv. Columbia</strain>
    </source>
</reference>
<reference key="5">
    <citation type="journal article" date="2005" name="Plant Physiol.">
        <title>Genome organization of more than 300 defensin-like genes in Arabidopsis.</title>
        <authorList>
            <person name="Silverstein K.A.T."/>
            <person name="Graham M.A."/>
            <person name="Paape T.D."/>
            <person name="VandenBosch K.A."/>
        </authorList>
    </citation>
    <scope>GENE FAMILY</scope>
</reference>
<dbReference type="EMBL" id="AJ632250">
    <property type="protein sequence ID" value="CAG15159.1"/>
    <property type="molecule type" value="Genomic_DNA"/>
</dbReference>
<dbReference type="EMBL" id="AJ632251">
    <property type="protein sequence ID" value="CAG15164.1"/>
    <property type="molecule type" value="Genomic_DNA"/>
</dbReference>
<dbReference type="EMBL" id="AJ632252">
    <property type="protein sequence ID" value="CAG15169.1"/>
    <property type="molecule type" value="Genomic_DNA"/>
</dbReference>
<dbReference type="EMBL" id="AJ632253">
    <property type="protein sequence ID" value="CAG26677.1"/>
    <property type="molecule type" value="Genomic_DNA"/>
</dbReference>
<dbReference type="EMBL" id="AJ632254">
    <property type="protein sequence ID" value="CAG15180.1"/>
    <property type="molecule type" value="Genomic_DNA"/>
</dbReference>
<dbReference type="EMBL" id="AJ632255">
    <property type="protein sequence ID" value="CAG15186.1"/>
    <property type="molecule type" value="Genomic_DNA"/>
</dbReference>
<dbReference type="EMBL" id="AJ632256">
    <property type="protein sequence ID" value="CAG15192.1"/>
    <property type="molecule type" value="Genomic_DNA"/>
</dbReference>
<dbReference type="EMBL" id="AJ632257">
    <property type="protein sequence ID" value="CAG15197.1"/>
    <property type="molecule type" value="Genomic_DNA"/>
</dbReference>
<dbReference type="EMBL" id="AJ632258">
    <property type="protein sequence ID" value="CAG15202.1"/>
    <property type="molecule type" value="Genomic_DNA"/>
</dbReference>
<dbReference type="EMBL" id="AJ632259">
    <property type="protein sequence ID" value="CAG15207.1"/>
    <property type="molecule type" value="Genomic_DNA"/>
</dbReference>
<dbReference type="EMBL" id="AJ632260">
    <property type="protein sequence ID" value="CAG15212.1"/>
    <property type="molecule type" value="Genomic_DNA"/>
</dbReference>
<dbReference type="EMBL" id="AJ632261">
    <property type="protein sequence ID" value="CAG15217.1"/>
    <property type="molecule type" value="Genomic_DNA"/>
</dbReference>
<dbReference type="EMBL" id="AJ632262">
    <property type="protein sequence ID" value="CAG15222.1"/>
    <property type="molecule type" value="Genomic_DNA"/>
</dbReference>
<dbReference type="EMBL" id="AJ632263">
    <property type="protein sequence ID" value="CAG15227.1"/>
    <property type="molecule type" value="Genomic_DNA"/>
</dbReference>
<dbReference type="EMBL" id="AJ632264">
    <property type="protein sequence ID" value="CAG15232.1"/>
    <property type="molecule type" value="Genomic_DNA"/>
</dbReference>
<dbReference type="EMBL" id="AJ632265">
    <property type="protein sequence ID" value="CAG15237.1"/>
    <property type="molecule type" value="Genomic_DNA"/>
</dbReference>
<dbReference type="EMBL" id="AJ632266">
    <property type="protein sequence ID" value="CAG15242.1"/>
    <property type="molecule type" value="Genomic_DNA"/>
</dbReference>
<dbReference type="EMBL" id="AC002335">
    <property type="protein sequence ID" value="AAB64322.2"/>
    <property type="status" value="ALT_INIT"/>
    <property type="molecule type" value="Genomic_DNA"/>
</dbReference>
<dbReference type="EMBL" id="CP002685">
    <property type="protein sequence ID" value="AEC10289.2"/>
    <property type="molecule type" value="Genomic_DNA"/>
</dbReference>
<dbReference type="EMBL" id="AK118750">
    <property type="protein sequence ID" value="BAC43343.1"/>
    <property type="molecule type" value="mRNA"/>
</dbReference>
<dbReference type="PIR" id="E84867">
    <property type="entry name" value="E84867"/>
</dbReference>
<dbReference type="RefSeq" id="NP_566002.2">
    <property type="nucleotide sequence ID" value="NM_129917.3"/>
</dbReference>
<dbReference type="SMR" id="O22869"/>
<dbReference type="FunCoup" id="O22869">
    <property type="interactions" value="21"/>
</dbReference>
<dbReference type="STRING" id="3702.O22869"/>
<dbReference type="PaxDb" id="3702-AT2G43550.1"/>
<dbReference type="ProteomicsDB" id="224186"/>
<dbReference type="EnsemblPlants" id="AT2G43550.1">
    <property type="protein sequence ID" value="AT2G43550.1"/>
    <property type="gene ID" value="AT2G43550"/>
</dbReference>
<dbReference type="GeneID" id="818957"/>
<dbReference type="Gramene" id="AT2G43550.1">
    <property type="protein sequence ID" value="AT2G43550.1"/>
    <property type="gene ID" value="AT2G43550"/>
</dbReference>
<dbReference type="KEGG" id="ath:AT2G43550"/>
<dbReference type="Araport" id="AT2G43550"/>
<dbReference type="TAIR" id="AT2G43550"/>
<dbReference type="HOGENOM" id="CLU_181760_0_0_1"/>
<dbReference type="InParanoid" id="O22869"/>
<dbReference type="OMA" id="ICVVEYG"/>
<dbReference type="PhylomeDB" id="O22869"/>
<dbReference type="PRO" id="PR:O22869"/>
<dbReference type="Proteomes" id="UP000006548">
    <property type="component" value="Chromosome 2"/>
</dbReference>
<dbReference type="ExpressionAtlas" id="O22869">
    <property type="expression patterns" value="baseline and differential"/>
</dbReference>
<dbReference type="GO" id="GO:0005576">
    <property type="term" value="C:extracellular region"/>
    <property type="evidence" value="ECO:0007669"/>
    <property type="project" value="UniProtKB-SubCell"/>
</dbReference>
<dbReference type="GO" id="GO:0019871">
    <property type="term" value="F:sodium channel inhibitor activity"/>
    <property type="evidence" value="ECO:0007669"/>
    <property type="project" value="InterPro"/>
</dbReference>
<dbReference type="GO" id="GO:0050832">
    <property type="term" value="P:defense response to fungus"/>
    <property type="evidence" value="ECO:0007669"/>
    <property type="project" value="UniProtKB-KW"/>
</dbReference>
<dbReference type="GO" id="GO:0031640">
    <property type="term" value="P:killing of cells of another organism"/>
    <property type="evidence" value="ECO:0007669"/>
    <property type="project" value="UniProtKB-KW"/>
</dbReference>
<dbReference type="Gene3D" id="3.30.30.10">
    <property type="entry name" value="Knottin, scorpion toxin-like"/>
    <property type="match status" value="1"/>
</dbReference>
<dbReference type="InterPro" id="IPR003614">
    <property type="entry name" value="Scorpion_toxin-like"/>
</dbReference>
<dbReference type="InterPro" id="IPR036574">
    <property type="entry name" value="Scorpion_toxin-like_sf"/>
</dbReference>
<dbReference type="InterPro" id="IPR002061">
    <property type="entry name" value="Scorpion_toxinL/defensin"/>
</dbReference>
<dbReference type="Pfam" id="PF00537">
    <property type="entry name" value="Toxin_3"/>
    <property type="match status" value="1"/>
</dbReference>
<dbReference type="SMART" id="SM00505">
    <property type="entry name" value="Knot1"/>
    <property type="match status" value="1"/>
</dbReference>
<dbReference type="SUPFAM" id="SSF57095">
    <property type="entry name" value="Scorpion toxin-like"/>
    <property type="match status" value="1"/>
</dbReference>
<organism>
    <name type="scientific">Arabidopsis thaliana</name>
    <name type="common">Mouse-ear cress</name>
    <dbReference type="NCBI Taxonomy" id="3702"/>
    <lineage>
        <taxon>Eukaryota</taxon>
        <taxon>Viridiplantae</taxon>
        <taxon>Streptophyta</taxon>
        <taxon>Embryophyta</taxon>
        <taxon>Tracheophyta</taxon>
        <taxon>Spermatophyta</taxon>
        <taxon>Magnoliopsida</taxon>
        <taxon>eudicotyledons</taxon>
        <taxon>Gunneridae</taxon>
        <taxon>Pentapetalae</taxon>
        <taxon>rosids</taxon>
        <taxon>malvids</taxon>
        <taxon>Brassicales</taxon>
        <taxon>Brassicaceae</taxon>
        <taxon>Camelineae</taxon>
        <taxon>Arabidopsis</taxon>
    </lineage>
</organism>
<keyword id="KW-0929">Antimicrobial</keyword>
<keyword id="KW-1015">Disulfide bond</keyword>
<keyword id="KW-0295">Fungicide</keyword>
<keyword id="KW-0611">Plant defense</keyword>
<keyword id="KW-1185">Reference proteome</keyword>
<keyword id="KW-0964">Secreted</keyword>
<keyword id="KW-0732">Signal</keyword>
<evidence type="ECO:0000250" key="1"/>
<evidence type="ECO:0000255" key="2"/>
<evidence type="ECO:0000305" key="3"/>
<evidence type="ECO:0000305" key="4">
    <source>
    </source>
</evidence>
<name>DF197_ARATH</name>